<gene>
    <name evidence="1" type="primary">aspS</name>
    <name type="ordered locus">Sden_1887</name>
</gene>
<accession>Q12N06</accession>
<name>SYD_SHEDO</name>
<reference key="1">
    <citation type="submission" date="2006-03" db="EMBL/GenBank/DDBJ databases">
        <title>Complete sequence of Shewanella denitrificans OS217.</title>
        <authorList>
            <consortium name="US DOE Joint Genome Institute"/>
            <person name="Copeland A."/>
            <person name="Lucas S."/>
            <person name="Lapidus A."/>
            <person name="Barry K."/>
            <person name="Detter J.C."/>
            <person name="Glavina del Rio T."/>
            <person name="Hammon N."/>
            <person name="Israni S."/>
            <person name="Dalin E."/>
            <person name="Tice H."/>
            <person name="Pitluck S."/>
            <person name="Brettin T."/>
            <person name="Bruce D."/>
            <person name="Han C."/>
            <person name="Tapia R."/>
            <person name="Gilna P."/>
            <person name="Kiss H."/>
            <person name="Schmutz J."/>
            <person name="Larimer F."/>
            <person name="Land M."/>
            <person name="Hauser L."/>
            <person name="Kyrpides N."/>
            <person name="Lykidis A."/>
            <person name="Richardson P."/>
        </authorList>
    </citation>
    <scope>NUCLEOTIDE SEQUENCE [LARGE SCALE GENOMIC DNA]</scope>
    <source>
        <strain>OS217 / ATCC BAA-1090 / DSM 15013</strain>
    </source>
</reference>
<sequence>MRSHYCGDINRSHLGQEVTLVGWVNRSRDLGGVVFLDLRDREGLVQVVYDPDLKDVFDVASSLRGEFCVQVTGLVRARPDSQINSQMKTGEIEVLGKGLTIINASAPLPLSMDNHQNNSEEQRLKYRYLDLRRPEMAERLIFRAKVTSAVRRFLDSNGFLDIETPILTKATPEGARDYLVPSRTYKGQFFALPQSPQLFKQLLMMSGFDRYYQIVKCFRDEDLRADRQPEFTQIDIETSFMTSEEVMVKTEEMMRGLFLELLNVDLGEFPRMTYNEAMRRFGSDKPDLRNPLELVDVADLLKEVEFAVFNGPANDEEGRVAALRIPNGATLSRKQIDDYTKFVGIYGAKGLAWMKINDLAAGMEGIQSPVLKFLTESIVNDIISRTGAQTGDIILFGADKANVVAEAMGALRLKAGEDFELLEGQWRPLWVIDFPMFEKINGGFHAVHHPFTAPRGVTAAELEANPANRVSDAYDMVLNGCELGGGSVRIHNAEMQSAVFRILGIEEEEAKEKFGFLLEALRYGTPPHAGLAFGLDRIIMLMTGATSIRDVMAFPKTTTAACPLTNAPGFANPAQLTELGIKVVEKVKVADGE</sequence>
<feature type="chain" id="PRO_1000006755" description="Aspartate--tRNA ligase">
    <location>
        <begin position="1"/>
        <end position="593"/>
    </location>
</feature>
<feature type="region of interest" description="Aspartate" evidence="1">
    <location>
        <begin position="197"/>
        <end position="200"/>
    </location>
</feature>
<feature type="binding site" evidence="1">
    <location>
        <position position="173"/>
    </location>
    <ligand>
        <name>L-aspartate</name>
        <dbReference type="ChEBI" id="CHEBI:29991"/>
    </ligand>
</feature>
<feature type="binding site" evidence="1">
    <location>
        <begin position="219"/>
        <end position="221"/>
    </location>
    <ligand>
        <name>ATP</name>
        <dbReference type="ChEBI" id="CHEBI:30616"/>
    </ligand>
</feature>
<feature type="binding site" evidence="1">
    <location>
        <position position="219"/>
    </location>
    <ligand>
        <name>L-aspartate</name>
        <dbReference type="ChEBI" id="CHEBI:29991"/>
    </ligand>
</feature>
<feature type="binding site" evidence="1">
    <location>
        <position position="228"/>
    </location>
    <ligand>
        <name>ATP</name>
        <dbReference type="ChEBI" id="CHEBI:30616"/>
    </ligand>
</feature>
<feature type="binding site" evidence="1">
    <location>
        <position position="448"/>
    </location>
    <ligand>
        <name>L-aspartate</name>
        <dbReference type="ChEBI" id="CHEBI:29991"/>
    </ligand>
</feature>
<feature type="binding site" evidence="1">
    <location>
        <position position="482"/>
    </location>
    <ligand>
        <name>ATP</name>
        <dbReference type="ChEBI" id="CHEBI:30616"/>
    </ligand>
</feature>
<feature type="binding site" evidence="1">
    <location>
        <position position="489"/>
    </location>
    <ligand>
        <name>L-aspartate</name>
        <dbReference type="ChEBI" id="CHEBI:29991"/>
    </ligand>
</feature>
<feature type="binding site" evidence="1">
    <location>
        <begin position="534"/>
        <end position="537"/>
    </location>
    <ligand>
        <name>ATP</name>
        <dbReference type="ChEBI" id="CHEBI:30616"/>
    </ligand>
</feature>
<keyword id="KW-0030">Aminoacyl-tRNA synthetase</keyword>
<keyword id="KW-0067">ATP-binding</keyword>
<keyword id="KW-0963">Cytoplasm</keyword>
<keyword id="KW-0436">Ligase</keyword>
<keyword id="KW-0547">Nucleotide-binding</keyword>
<keyword id="KW-0648">Protein biosynthesis</keyword>
<keyword id="KW-1185">Reference proteome</keyword>
<proteinExistence type="inferred from homology"/>
<organism>
    <name type="scientific">Shewanella denitrificans (strain OS217 / ATCC BAA-1090 / DSM 15013)</name>
    <dbReference type="NCBI Taxonomy" id="318161"/>
    <lineage>
        <taxon>Bacteria</taxon>
        <taxon>Pseudomonadati</taxon>
        <taxon>Pseudomonadota</taxon>
        <taxon>Gammaproteobacteria</taxon>
        <taxon>Alteromonadales</taxon>
        <taxon>Shewanellaceae</taxon>
        <taxon>Shewanella</taxon>
    </lineage>
</organism>
<dbReference type="EC" id="6.1.1.12" evidence="1"/>
<dbReference type="EMBL" id="CP000302">
    <property type="protein sequence ID" value="ABE55170.1"/>
    <property type="molecule type" value="Genomic_DNA"/>
</dbReference>
<dbReference type="RefSeq" id="WP_011496326.1">
    <property type="nucleotide sequence ID" value="NC_007954.1"/>
</dbReference>
<dbReference type="SMR" id="Q12N06"/>
<dbReference type="STRING" id="318161.Sden_1887"/>
<dbReference type="KEGG" id="sdn:Sden_1887"/>
<dbReference type="eggNOG" id="COG0173">
    <property type="taxonomic scope" value="Bacteria"/>
</dbReference>
<dbReference type="HOGENOM" id="CLU_014330_3_2_6"/>
<dbReference type="OrthoDB" id="9802326at2"/>
<dbReference type="Proteomes" id="UP000001982">
    <property type="component" value="Chromosome"/>
</dbReference>
<dbReference type="GO" id="GO:0005737">
    <property type="term" value="C:cytoplasm"/>
    <property type="evidence" value="ECO:0007669"/>
    <property type="project" value="UniProtKB-SubCell"/>
</dbReference>
<dbReference type="GO" id="GO:0004815">
    <property type="term" value="F:aspartate-tRNA ligase activity"/>
    <property type="evidence" value="ECO:0007669"/>
    <property type="project" value="UniProtKB-UniRule"/>
</dbReference>
<dbReference type="GO" id="GO:0005524">
    <property type="term" value="F:ATP binding"/>
    <property type="evidence" value="ECO:0007669"/>
    <property type="project" value="UniProtKB-UniRule"/>
</dbReference>
<dbReference type="GO" id="GO:0003676">
    <property type="term" value="F:nucleic acid binding"/>
    <property type="evidence" value="ECO:0007669"/>
    <property type="project" value="InterPro"/>
</dbReference>
<dbReference type="GO" id="GO:0006422">
    <property type="term" value="P:aspartyl-tRNA aminoacylation"/>
    <property type="evidence" value="ECO:0007669"/>
    <property type="project" value="UniProtKB-UniRule"/>
</dbReference>
<dbReference type="CDD" id="cd00777">
    <property type="entry name" value="AspRS_core"/>
    <property type="match status" value="1"/>
</dbReference>
<dbReference type="CDD" id="cd04317">
    <property type="entry name" value="EcAspRS_like_N"/>
    <property type="match status" value="1"/>
</dbReference>
<dbReference type="Gene3D" id="3.30.930.10">
    <property type="entry name" value="Bira Bifunctional Protein, Domain 2"/>
    <property type="match status" value="1"/>
</dbReference>
<dbReference type="Gene3D" id="3.30.1360.30">
    <property type="entry name" value="GAD-like domain"/>
    <property type="match status" value="1"/>
</dbReference>
<dbReference type="Gene3D" id="2.40.50.140">
    <property type="entry name" value="Nucleic acid-binding proteins"/>
    <property type="match status" value="1"/>
</dbReference>
<dbReference type="HAMAP" id="MF_00044">
    <property type="entry name" value="Asp_tRNA_synth_type1"/>
    <property type="match status" value="1"/>
</dbReference>
<dbReference type="InterPro" id="IPR004364">
    <property type="entry name" value="Aa-tRNA-synt_II"/>
</dbReference>
<dbReference type="InterPro" id="IPR006195">
    <property type="entry name" value="aa-tRNA-synth_II"/>
</dbReference>
<dbReference type="InterPro" id="IPR045864">
    <property type="entry name" value="aa-tRNA-synth_II/BPL/LPL"/>
</dbReference>
<dbReference type="InterPro" id="IPR004524">
    <property type="entry name" value="Asp-tRNA-ligase_1"/>
</dbReference>
<dbReference type="InterPro" id="IPR047089">
    <property type="entry name" value="Asp-tRNA-ligase_1_N"/>
</dbReference>
<dbReference type="InterPro" id="IPR002312">
    <property type="entry name" value="Asp/Asn-tRNA-synth_IIb"/>
</dbReference>
<dbReference type="InterPro" id="IPR047090">
    <property type="entry name" value="AspRS_core"/>
</dbReference>
<dbReference type="InterPro" id="IPR004115">
    <property type="entry name" value="GAD-like_sf"/>
</dbReference>
<dbReference type="InterPro" id="IPR029351">
    <property type="entry name" value="GAD_dom"/>
</dbReference>
<dbReference type="InterPro" id="IPR012340">
    <property type="entry name" value="NA-bd_OB-fold"/>
</dbReference>
<dbReference type="InterPro" id="IPR004365">
    <property type="entry name" value="NA-bd_OB_tRNA"/>
</dbReference>
<dbReference type="NCBIfam" id="TIGR00459">
    <property type="entry name" value="aspS_bact"/>
    <property type="match status" value="1"/>
</dbReference>
<dbReference type="NCBIfam" id="NF001750">
    <property type="entry name" value="PRK00476.1"/>
    <property type="match status" value="1"/>
</dbReference>
<dbReference type="PANTHER" id="PTHR22594:SF5">
    <property type="entry name" value="ASPARTATE--TRNA LIGASE, MITOCHONDRIAL"/>
    <property type="match status" value="1"/>
</dbReference>
<dbReference type="PANTHER" id="PTHR22594">
    <property type="entry name" value="ASPARTYL/LYSYL-TRNA SYNTHETASE"/>
    <property type="match status" value="1"/>
</dbReference>
<dbReference type="Pfam" id="PF02938">
    <property type="entry name" value="GAD"/>
    <property type="match status" value="1"/>
</dbReference>
<dbReference type="Pfam" id="PF00152">
    <property type="entry name" value="tRNA-synt_2"/>
    <property type="match status" value="1"/>
</dbReference>
<dbReference type="Pfam" id="PF01336">
    <property type="entry name" value="tRNA_anti-codon"/>
    <property type="match status" value="1"/>
</dbReference>
<dbReference type="PRINTS" id="PR01042">
    <property type="entry name" value="TRNASYNTHASP"/>
</dbReference>
<dbReference type="SUPFAM" id="SSF55681">
    <property type="entry name" value="Class II aaRS and biotin synthetases"/>
    <property type="match status" value="1"/>
</dbReference>
<dbReference type="SUPFAM" id="SSF55261">
    <property type="entry name" value="GAD domain-like"/>
    <property type="match status" value="1"/>
</dbReference>
<dbReference type="SUPFAM" id="SSF50249">
    <property type="entry name" value="Nucleic acid-binding proteins"/>
    <property type="match status" value="1"/>
</dbReference>
<dbReference type="PROSITE" id="PS50862">
    <property type="entry name" value="AA_TRNA_LIGASE_II"/>
    <property type="match status" value="1"/>
</dbReference>
<comment type="function">
    <text evidence="1">Catalyzes the attachment of L-aspartate to tRNA(Asp) in a two-step reaction: L-aspartate is first activated by ATP to form Asp-AMP and then transferred to the acceptor end of tRNA(Asp).</text>
</comment>
<comment type="catalytic activity">
    <reaction evidence="1">
        <text>tRNA(Asp) + L-aspartate + ATP = L-aspartyl-tRNA(Asp) + AMP + diphosphate</text>
        <dbReference type="Rhea" id="RHEA:19649"/>
        <dbReference type="Rhea" id="RHEA-COMP:9660"/>
        <dbReference type="Rhea" id="RHEA-COMP:9678"/>
        <dbReference type="ChEBI" id="CHEBI:29991"/>
        <dbReference type="ChEBI" id="CHEBI:30616"/>
        <dbReference type="ChEBI" id="CHEBI:33019"/>
        <dbReference type="ChEBI" id="CHEBI:78442"/>
        <dbReference type="ChEBI" id="CHEBI:78516"/>
        <dbReference type="ChEBI" id="CHEBI:456215"/>
        <dbReference type="EC" id="6.1.1.12"/>
    </reaction>
</comment>
<comment type="subunit">
    <text evidence="1">Homodimer.</text>
</comment>
<comment type="subcellular location">
    <subcellularLocation>
        <location evidence="1">Cytoplasm</location>
    </subcellularLocation>
</comment>
<comment type="similarity">
    <text evidence="1">Belongs to the class-II aminoacyl-tRNA synthetase family. Type 1 subfamily.</text>
</comment>
<protein>
    <recommendedName>
        <fullName evidence="1">Aspartate--tRNA ligase</fullName>
        <ecNumber evidence="1">6.1.1.12</ecNumber>
    </recommendedName>
    <alternativeName>
        <fullName evidence="1">Aspartyl-tRNA synthetase</fullName>
        <shortName evidence="1">AspRS</shortName>
    </alternativeName>
</protein>
<evidence type="ECO:0000255" key="1">
    <source>
        <dbReference type="HAMAP-Rule" id="MF_00044"/>
    </source>
</evidence>